<sequence length="24" mass="2889">RKGWFKAMKSIAKFIAKEKLKEHL</sequence>
<reference key="1">
    <citation type="journal article" date="2012" name="Curr. Mol. Med.">
        <title>A novel spider peptide toxin suppresses tumor growth through dual signaling pathways.</title>
        <authorList>
            <person name="Liu Z."/>
            <person name="Deng M."/>
            <person name="Xiang J."/>
            <person name="Ma H."/>
            <person name="Hu W."/>
            <person name="Zhao Y."/>
            <person name="Li D.W."/>
            <person name="Liang S."/>
        </authorList>
    </citation>
    <scope>PROTEIN SEQUENCE</scope>
    <scope>SUBCELLULAR LOCATION</scope>
    <scope>FUNCTION</scope>
</reference>
<reference key="2">
    <citation type="journal article" date="2013" name="Curr. Mol. Med.">
        <title>Antimicrobial potential of Lycosin-I, a cationic and amphiphilic peptide from the venom of the spider Lycosa singorensis.</title>
        <authorList>
            <person name="Tan H."/>
            <person name="Ding X."/>
            <person name="Meng S."/>
            <person name="Liu C."/>
            <person name="Wang H."/>
            <person name="Xia L."/>
            <person name="Liu Z."/>
            <person name="Liang S."/>
        </authorList>
    </citation>
    <scope>FUNCTION</scope>
</reference>
<reference key="3">
    <citation type="journal article" date="2014" name="Antimicrob. Agents Chemother.">
        <title>In vitro potential of Lycosin-I as an alternative antimicrobial drug for treatment of multidrug-resistant Acinetobacter baumannii infections.</title>
        <authorList>
            <person name="Wang L."/>
            <person name="Wang Y.J."/>
            <person name="Liu Y.Y."/>
            <person name="Li H."/>
            <person name="Guo L.X."/>
            <person name="Liu Z.H."/>
            <person name="Shi X.L."/>
            <person name="Hu M."/>
        </authorList>
    </citation>
    <scope>FUNCTION</scope>
</reference>
<reference key="4">
    <citation type="journal article" date="2016" name="J. Phys. Chem. B">
        <title>Quantifying the distribution of the stoichiometric composition of anticancer peptide Lycosin-I on the lipid membrane with single molecule spectroscopy.</title>
        <authorList>
            <person name="Tan H."/>
            <person name="Luo W."/>
            <person name="Wei L."/>
            <person name="Chen B."/>
            <person name="Li W."/>
            <person name="Xiao L."/>
            <person name="Manzhos S."/>
            <person name="Liu Z."/>
            <person name="Liang S."/>
        </authorList>
    </citation>
    <scope>SUBUNIT</scope>
</reference>
<reference key="5">
    <citation type="journal article" date="2017" name="Theranostics">
        <title>Spider toxin peptide Lycosin-I functionalized gold nanoparticles for in vivo tumor targeting and therapy.</title>
        <authorList>
            <person name="Tan H."/>
            <person name="Huang Y."/>
            <person name="Xu J."/>
            <person name="Chen B."/>
            <person name="Zhang P."/>
            <person name="Ye Z."/>
            <person name="Liang S."/>
            <person name="Xiao L."/>
            <person name="Liu Z."/>
        </authorList>
    </citation>
    <scope>BIOTECHNOLOGY</scope>
</reference>
<reference key="6">
    <citation type="journal article" date="2018" name="Microbiol. Res.">
        <title>Antifungal activity of spider venom-derived peptide lycosin-I against Candida tropicalis.</title>
        <authorList>
            <person name="Tan L."/>
            <person name="Bai L."/>
            <person name="Wang L."/>
            <person name="He L."/>
            <person name="Li G."/>
            <person name="Du W."/>
            <person name="Shen T."/>
            <person name="Xiang Z."/>
            <person name="Wu J."/>
            <person name="Liu Z."/>
            <person name="Hu M."/>
        </authorList>
    </citation>
    <scope>FUNCTION</scope>
</reference>
<reference key="7">
    <citation type="journal article" date="2018" name="Peptides">
        <title>Vasodilator and hypotensive effects of the spider peptide Lycosin-I in vitro and in vivo.</title>
        <authorList>
            <person name="Ma B."/>
            <person name="Xi Z."/>
            <person name="Li J."/>
            <person name="Gao T."/>
            <person name="Liao R."/>
            <person name="Wang S."/>
            <person name="Li X."/>
            <person name="Tang Y."/>
            <person name="Wang Z."/>
            <person name="Hou S."/>
            <person name="Jiang J."/>
            <person name="Deng M."/>
            <person name="Duan Z."/>
            <person name="Tang X."/>
            <person name="Jiang L."/>
        </authorList>
    </citation>
    <scope>FUNCTION</scope>
    <scope>SYNTHESIS</scope>
</reference>
<reference key="8">
    <citation type="journal article" date="2019" name="Exp. Parasitol.">
        <title>Anti-parasitic effect on Toxoplasma gondii induced by a spider peptide lycosin-I.</title>
        <authorList>
            <person name="Tang Y."/>
            <person name="Hou S."/>
            <person name="Li X."/>
            <person name="Wu M."/>
            <person name="Ma B."/>
            <person name="Wang Z."/>
            <person name="Jiang J."/>
            <person name="Deng M."/>
            <person name="Duan Z."/>
            <person name="Tang X."/>
            <person name="Liu Y."/>
            <person name="Wang W."/>
            <person name="Han X."/>
            <person name="Jiang L."/>
        </authorList>
    </citation>
    <scope>FUNCTION</scope>
</reference>
<accession>P0DV70</accession>
<feature type="peptide" id="PRO_0000455434" description="Lycosin-I" evidence="1">
    <location>
        <begin position="1"/>
        <end position="24"/>
    </location>
</feature>
<proteinExistence type="evidence at protein level"/>
<comment type="function">
    <text evidence="1 2 3 6 7 8">Antimicrobial peptide that inhibits many reference strains of bacteria and fungi (PubMed:23638903, PubMed:30269852). Is potent against Candida species and multidrug-resistant Acinetobacter baumannii (MDRAB) (PubMed:25199777, PubMed:30269852). Is probably localized in the cytoplasm after being transported through the cell wall and membrane (PubMed:30269852). Is able to interact with cell membranes and enter into cell plasma to activate the mitochondrial death pathway to sensitize cancer cells for apoptosis, as well as up-regulates p27 to inhibit cell proliferation (PubMed:22882120). It shows very low effect on normal cells, such as erythrocytes, Hek293t cells (PubMed:22882120). It also potently inhibits tumor cell growth in vitro, and suppresses various tumor growth in vivo when tested in human cancer xenograft models (PubMed:22882120). It interacts with the cell membrane and is then internalized into the cytoplasm of cancer cells to initiate the programmable cell death (PubMed:22882120). In addition, this peptide has the therapeutic effects of anti-hypertension by endothelium-dependent vasodilatation via the NO/sGC/cGMP signaling pathway (PubMed:29248696). In vivo, this peptide also shows a significant ability to inhibit T.gondii invasion and proliferation, making it a potential alternative agent for the treatment of toxoplasmosis (PubMed:30682337).</text>
</comment>
<comment type="subunit">
    <text evidence="4">Monomer in solution. Small size oligomers on the lipid membranes.</text>
</comment>
<comment type="subcellular location">
    <subcellularLocation>
        <location evidence="1">Secreted</location>
    </subcellularLocation>
    <subcellularLocation>
        <location evidence="4">Target cell membrane</location>
    </subcellularLocation>
    <text evidence="13">Lipid membranes induce the formation of amphipathic-helix conformation of lycosin-I and subsequently stable aggregates of peptide molecules on bilayer, which are believed to be crucial for the cell penetrating ability of lycosin-I.</text>
</comment>
<comment type="biotechnology">
    <text evidence="5">When conjugated to gold nanoparticles (LGNPs) or gold nanorods (LGNRs), this peptide has great potential in cancer-targeting delivery and photothermal therapy.</text>
</comment>
<comment type="similarity">
    <text evidence="12">Belongs to the cationic peptide 04 (cupiennin) family. 05 subfamily.</text>
</comment>
<organism>
    <name type="scientific">Lycosa singoriensis</name>
    <name type="common">Wolf spider</name>
    <name type="synonym">Aranea singoriensis</name>
    <dbReference type="NCBI Taxonomy" id="434756"/>
    <lineage>
        <taxon>Eukaryota</taxon>
        <taxon>Metazoa</taxon>
        <taxon>Ecdysozoa</taxon>
        <taxon>Arthropoda</taxon>
        <taxon>Chelicerata</taxon>
        <taxon>Arachnida</taxon>
        <taxon>Araneae</taxon>
        <taxon>Araneomorphae</taxon>
        <taxon>Entelegynae</taxon>
        <taxon>Lycosoidea</taxon>
        <taxon>Lycosidae</taxon>
        <taxon>Lycosa</taxon>
    </lineage>
</organism>
<keyword id="KW-0044">Antibiotic</keyword>
<keyword id="KW-0929">Antimicrobial</keyword>
<keyword id="KW-0903">Direct protein sequencing</keyword>
<keyword id="KW-0295">Fungicide</keyword>
<keyword id="KW-0382">Hypotensive agent</keyword>
<keyword id="KW-0472">Membrane</keyword>
<keyword id="KW-0964">Secreted</keyword>
<keyword id="KW-1052">Target cell membrane</keyword>
<keyword id="KW-1053">Target membrane</keyword>
<keyword id="KW-0838">Vasoactive</keyword>
<evidence type="ECO:0000269" key="1">
    <source>
    </source>
</evidence>
<evidence type="ECO:0000269" key="2">
    <source>
    </source>
</evidence>
<evidence type="ECO:0000269" key="3">
    <source>
    </source>
</evidence>
<evidence type="ECO:0000269" key="4">
    <source>
    </source>
</evidence>
<evidence type="ECO:0000269" key="5">
    <source>
    </source>
</evidence>
<evidence type="ECO:0000269" key="6">
    <source>
    </source>
</evidence>
<evidence type="ECO:0000269" key="7">
    <source>
    </source>
</evidence>
<evidence type="ECO:0000269" key="8">
    <source>
    </source>
</evidence>
<evidence type="ECO:0000303" key="9">
    <source>
    </source>
</evidence>
<evidence type="ECO:0000303" key="10">
    <source>
    </source>
</evidence>
<evidence type="ECO:0000303" key="11">
    <source>
    </source>
</evidence>
<evidence type="ECO:0000305" key="12"/>
<evidence type="ECO:0000305" key="13">
    <source>
    </source>
</evidence>
<protein>
    <recommendedName>
        <fullName evidence="9 10 11">Lycosin-I</fullName>
    </recommendedName>
    <alternativeName>
        <fullName evidence="11">Anticancer peptide</fullName>
    </alternativeName>
    <alternativeName>
        <fullName evidence="11">Cell penetrating peptide</fullName>
    </alternativeName>
</protein>
<name>LYS1_LYCSI</name>
<dbReference type="GO" id="GO:0005576">
    <property type="term" value="C:extracellular region"/>
    <property type="evidence" value="ECO:0007669"/>
    <property type="project" value="UniProtKB-SubCell"/>
</dbReference>
<dbReference type="GO" id="GO:0016020">
    <property type="term" value="C:membrane"/>
    <property type="evidence" value="ECO:0007669"/>
    <property type="project" value="UniProtKB-KW"/>
</dbReference>
<dbReference type="GO" id="GO:0044218">
    <property type="term" value="C:other organism cell membrane"/>
    <property type="evidence" value="ECO:0007669"/>
    <property type="project" value="UniProtKB-KW"/>
</dbReference>
<dbReference type="GO" id="GO:0097746">
    <property type="term" value="P:blood vessel diameter maintenance"/>
    <property type="evidence" value="ECO:0007669"/>
    <property type="project" value="UniProtKB-KW"/>
</dbReference>
<dbReference type="GO" id="GO:0042742">
    <property type="term" value="P:defense response to bacterium"/>
    <property type="evidence" value="ECO:0007669"/>
    <property type="project" value="UniProtKB-KW"/>
</dbReference>
<dbReference type="GO" id="GO:0050832">
    <property type="term" value="P:defense response to fungus"/>
    <property type="evidence" value="ECO:0007669"/>
    <property type="project" value="UniProtKB-KW"/>
</dbReference>
<dbReference type="GO" id="GO:0031640">
    <property type="term" value="P:killing of cells of another organism"/>
    <property type="evidence" value="ECO:0007669"/>
    <property type="project" value="UniProtKB-KW"/>
</dbReference>
<dbReference type="GO" id="GO:0008217">
    <property type="term" value="P:regulation of blood pressure"/>
    <property type="evidence" value="ECO:0007669"/>
    <property type="project" value="UniProtKB-KW"/>
</dbReference>